<keyword id="KW-1015">Disulfide bond</keyword>
<keyword id="KW-0325">Glycoprotein</keyword>
<keyword id="KW-0326">Glycosidase</keyword>
<keyword id="KW-0378">Hydrolase</keyword>
<keyword id="KW-1185">Reference proteome</keyword>
<keyword id="KW-0732">Signal</keyword>
<sequence length="508" mass="57078">MKLYSLLSVFLVILLATSDSDAFTRNNFPKDFLFGAATSAYQWEGAVAEDGRTPSVWDTFSHTYNRGNLGNGDITSDGYHKYKEDVKLMAEMGLESFRFSISWSRLIPNGRGLINPKGLLFYKNLIKELISHGIEPHVTLYHYDLPQSLEDEYGGWINRKIIEDFTAYADVCFREFGEDVKLWTTINEATIFAIGSYDQGISPPGHCSPNKFINCTSGNSSTEPYLAGHNILLAHASASKLYKLKYKSTQKGSIGLSIFAFGLSPYTNSKDDEIATQRAKAFFYGWMLKPLVFGDYPDEMKRTVGSRLPVFSEEESEQLKGSSDFIGIIHYTTFYVTNKPSPSIFPSMNEGFFKDMGVYMISAANSSFLLWEATPWGLEGILEYIKQSYNNPPIYILENGMPMGRDSTLQDTQRIEFIQAYIGAMLNAIKNGSDTRGYFVWSMIDLYELLSGYTTSFGMYYVNFSDPGRKRTPKLSASWYTGFLNGTIDVATQDTIQLQSNISGSSSL</sequence>
<gene>
    <name evidence="7" type="primary">BGLU10</name>
    <name evidence="9" type="ordered locus">At4g27830</name>
    <name evidence="10" type="ORF">T27E11.70</name>
</gene>
<comment type="catalytic activity">
    <reaction evidence="1">
        <text>Hydrolysis of terminal, non-reducing beta-D-glucosyl residues with release of beta-D-glucose.</text>
        <dbReference type="EC" id="3.2.1.21"/>
    </reaction>
</comment>
<comment type="similarity">
    <text evidence="8">Belongs to the glycosyl hydrolase 1 family.</text>
</comment>
<comment type="sequence caution" evidence="8">
    <conflict type="erroneous gene model prediction">
        <sequence resource="EMBL-CDS" id="CAB43971"/>
    </conflict>
</comment>
<comment type="sequence caution" evidence="8">
    <conflict type="erroneous gene model prediction">
        <sequence resource="EMBL-CDS" id="CAB81432"/>
    </conflict>
</comment>
<feature type="signal peptide" evidence="5">
    <location>
        <begin position="1"/>
        <end position="22"/>
    </location>
</feature>
<feature type="chain" id="PRO_0000389572" description="Beta-glucosidase 10">
    <location>
        <begin position="23"/>
        <end position="508"/>
    </location>
</feature>
<feature type="active site" description="Proton donor" evidence="3">
    <location>
        <position position="188"/>
    </location>
</feature>
<feature type="active site" description="Nucleophile" evidence="3">
    <location>
        <position position="398"/>
    </location>
</feature>
<feature type="binding site" evidence="3">
    <location>
        <position position="42"/>
    </location>
    <ligand>
        <name>a beta-D-glucoside</name>
        <dbReference type="ChEBI" id="CHEBI:22798"/>
    </ligand>
</feature>
<feature type="binding site" evidence="3">
    <location>
        <position position="142"/>
    </location>
    <ligand>
        <name>a beta-D-glucoside</name>
        <dbReference type="ChEBI" id="CHEBI:22798"/>
    </ligand>
</feature>
<feature type="binding site" evidence="3">
    <location>
        <begin position="187"/>
        <end position="188"/>
    </location>
    <ligand>
        <name>a beta-D-glucoside</name>
        <dbReference type="ChEBI" id="CHEBI:22798"/>
    </ligand>
</feature>
<feature type="binding site" evidence="3">
    <location>
        <position position="331"/>
    </location>
    <ligand>
        <name>a beta-D-glucoside</name>
        <dbReference type="ChEBI" id="CHEBI:22798"/>
    </ligand>
</feature>
<feature type="binding site" evidence="4">
    <location>
        <position position="398"/>
    </location>
    <ligand>
        <name>a beta-D-glucoside</name>
        <dbReference type="ChEBI" id="CHEBI:22798"/>
    </ligand>
</feature>
<feature type="binding site" evidence="3">
    <location>
        <position position="441"/>
    </location>
    <ligand>
        <name>a beta-D-glucoside</name>
        <dbReference type="ChEBI" id="CHEBI:22798"/>
    </ligand>
</feature>
<feature type="binding site" evidence="2">
    <location>
        <position position="457"/>
    </location>
    <ligand>
        <name>a beta-D-glucoside</name>
        <dbReference type="ChEBI" id="CHEBI:22798"/>
    </ligand>
</feature>
<feature type="glycosylation site" description="N-linked (GlcNAc...) asparagine" evidence="6">
    <location>
        <position position="214"/>
    </location>
</feature>
<feature type="glycosylation site" description="N-linked (GlcNAc...) asparagine" evidence="6">
    <location>
        <position position="219"/>
    </location>
</feature>
<feature type="glycosylation site" description="N-linked (GlcNAc...) asparagine" evidence="6">
    <location>
        <position position="365"/>
    </location>
</feature>
<feature type="glycosylation site" description="N-linked (GlcNAc...) asparagine" evidence="6">
    <location>
        <position position="431"/>
    </location>
</feature>
<feature type="glycosylation site" description="N-linked (GlcNAc...) asparagine" evidence="6">
    <location>
        <position position="463"/>
    </location>
</feature>
<feature type="glycosylation site" description="N-linked (GlcNAc...) asparagine" evidence="6">
    <location>
        <position position="485"/>
    </location>
</feature>
<feature type="glycosylation site" description="N-linked (GlcNAc...) asparagine" evidence="6">
    <location>
        <position position="501"/>
    </location>
</feature>
<feature type="disulfide bond" evidence="3">
    <location>
        <begin position="207"/>
        <end position="215"/>
    </location>
</feature>
<reference key="1">
    <citation type="journal article" date="1999" name="Nature">
        <title>Sequence and analysis of chromosome 4 of the plant Arabidopsis thaliana.</title>
        <authorList>
            <person name="Mayer K.F.X."/>
            <person name="Schueller C."/>
            <person name="Wambutt R."/>
            <person name="Murphy G."/>
            <person name="Volckaert G."/>
            <person name="Pohl T."/>
            <person name="Duesterhoeft A."/>
            <person name="Stiekema W."/>
            <person name="Entian K.-D."/>
            <person name="Terryn N."/>
            <person name="Harris B."/>
            <person name="Ansorge W."/>
            <person name="Brandt P."/>
            <person name="Grivell L.A."/>
            <person name="Rieger M."/>
            <person name="Weichselgartner M."/>
            <person name="de Simone V."/>
            <person name="Obermaier B."/>
            <person name="Mache R."/>
            <person name="Mueller M."/>
            <person name="Kreis M."/>
            <person name="Delseny M."/>
            <person name="Puigdomenech P."/>
            <person name="Watson M."/>
            <person name="Schmidtheini T."/>
            <person name="Reichert B."/>
            <person name="Portetelle D."/>
            <person name="Perez-Alonso M."/>
            <person name="Boutry M."/>
            <person name="Bancroft I."/>
            <person name="Vos P."/>
            <person name="Hoheisel J."/>
            <person name="Zimmermann W."/>
            <person name="Wedler H."/>
            <person name="Ridley P."/>
            <person name="Langham S.-A."/>
            <person name="McCullagh B."/>
            <person name="Bilham L."/>
            <person name="Robben J."/>
            <person name="van der Schueren J."/>
            <person name="Grymonprez B."/>
            <person name="Chuang Y.-J."/>
            <person name="Vandenbussche F."/>
            <person name="Braeken M."/>
            <person name="Weltjens I."/>
            <person name="Voet M."/>
            <person name="Bastiaens I."/>
            <person name="Aert R."/>
            <person name="Defoor E."/>
            <person name="Weitzenegger T."/>
            <person name="Bothe G."/>
            <person name="Ramsperger U."/>
            <person name="Hilbert H."/>
            <person name="Braun M."/>
            <person name="Holzer E."/>
            <person name="Brandt A."/>
            <person name="Peters S."/>
            <person name="van Staveren M."/>
            <person name="Dirkse W."/>
            <person name="Mooijman P."/>
            <person name="Klein Lankhorst R."/>
            <person name="Rose M."/>
            <person name="Hauf J."/>
            <person name="Koetter P."/>
            <person name="Berneiser S."/>
            <person name="Hempel S."/>
            <person name="Feldpausch M."/>
            <person name="Lamberth S."/>
            <person name="Van den Daele H."/>
            <person name="De Keyser A."/>
            <person name="Buysshaert C."/>
            <person name="Gielen J."/>
            <person name="Villarroel R."/>
            <person name="De Clercq R."/>
            <person name="van Montagu M."/>
            <person name="Rogers J."/>
            <person name="Cronin A."/>
            <person name="Quail M.A."/>
            <person name="Bray-Allen S."/>
            <person name="Clark L."/>
            <person name="Doggett J."/>
            <person name="Hall S."/>
            <person name="Kay M."/>
            <person name="Lennard N."/>
            <person name="McLay K."/>
            <person name="Mayes R."/>
            <person name="Pettett A."/>
            <person name="Rajandream M.A."/>
            <person name="Lyne M."/>
            <person name="Benes V."/>
            <person name="Rechmann S."/>
            <person name="Borkova D."/>
            <person name="Bloecker H."/>
            <person name="Scharfe M."/>
            <person name="Grimm M."/>
            <person name="Loehnert T.-H."/>
            <person name="Dose S."/>
            <person name="de Haan M."/>
            <person name="Maarse A.C."/>
            <person name="Schaefer M."/>
            <person name="Mueller-Auer S."/>
            <person name="Gabel C."/>
            <person name="Fuchs M."/>
            <person name="Fartmann B."/>
            <person name="Granderath K."/>
            <person name="Dauner D."/>
            <person name="Herzl A."/>
            <person name="Neumann S."/>
            <person name="Argiriou A."/>
            <person name="Vitale D."/>
            <person name="Liguori R."/>
            <person name="Piravandi E."/>
            <person name="Massenet O."/>
            <person name="Quigley F."/>
            <person name="Clabauld G."/>
            <person name="Muendlein A."/>
            <person name="Felber R."/>
            <person name="Schnabl S."/>
            <person name="Hiller R."/>
            <person name="Schmidt W."/>
            <person name="Lecharny A."/>
            <person name="Aubourg S."/>
            <person name="Chefdor F."/>
            <person name="Cooke R."/>
            <person name="Berger C."/>
            <person name="Monfort A."/>
            <person name="Casacuberta E."/>
            <person name="Gibbons T."/>
            <person name="Weber N."/>
            <person name="Vandenbol M."/>
            <person name="Bargues M."/>
            <person name="Terol J."/>
            <person name="Torres A."/>
            <person name="Perez-Perez A."/>
            <person name="Purnelle B."/>
            <person name="Bent E."/>
            <person name="Johnson S."/>
            <person name="Tacon D."/>
            <person name="Jesse T."/>
            <person name="Heijnen L."/>
            <person name="Schwarz S."/>
            <person name="Scholler P."/>
            <person name="Heber S."/>
            <person name="Francs P."/>
            <person name="Bielke C."/>
            <person name="Frishman D."/>
            <person name="Haase D."/>
            <person name="Lemcke K."/>
            <person name="Mewes H.-W."/>
            <person name="Stocker S."/>
            <person name="Zaccaria P."/>
            <person name="Bevan M."/>
            <person name="Wilson R.K."/>
            <person name="de la Bastide M."/>
            <person name="Habermann K."/>
            <person name="Parnell L."/>
            <person name="Dedhia N."/>
            <person name="Gnoj L."/>
            <person name="Schutz K."/>
            <person name="Huang E."/>
            <person name="Spiegel L."/>
            <person name="Sekhon M."/>
            <person name="Murray J."/>
            <person name="Sheet P."/>
            <person name="Cordes M."/>
            <person name="Abu-Threideh J."/>
            <person name="Stoneking T."/>
            <person name="Kalicki J."/>
            <person name="Graves T."/>
            <person name="Harmon G."/>
            <person name="Edwards J."/>
            <person name="Latreille P."/>
            <person name="Courtney L."/>
            <person name="Cloud J."/>
            <person name="Abbott A."/>
            <person name="Scott K."/>
            <person name="Johnson D."/>
            <person name="Minx P."/>
            <person name="Bentley D."/>
            <person name="Fulton B."/>
            <person name="Miller N."/>
            <person name="Greco T."/>
            <person name="Kemp K."/>
            <person name="Kramer J."/>
            <person name="Fulton L."/>
            <person name="Mardis E."/>
            <person name="Dante M."/>
            <person name="Pepin K."/>
            <person name="Hillier L.W."/>
            <person name="Nelson J."/>
            <person name="Spieth J."/>
            <person name="Ryan E."/>
            <person name="Andrews S."/>
            <person name="Geisel C."/>
            <person name="Layman D."/>
            <person name="Du H."/>
            <person name="Ali J."/>
            <person name="Berghoff A."/>
            <person name="Jones K."/>
            <person name="Drone K."/>
            <person name="Cotton M."/>
            <person name="Joshu C."/>
            <person name="Antonoiu B."/>
            <person name="Zidanic M."/>
            <person name="Strong C."/>
            <person name="Sun H."/>
            <person name="Lamar B."/>
            <person name="Yordan C."/>
            <person name="Ma P."/>
            <person name="Zhong J."/>
            <person name="Preston R."/>
            <person name="Vil D."/>
            <person name="Shekher M."/>
            <person name="Matero A."/>
            <person name="Shah R."/>
            <person name="Swaby I.K."/>
            <person name="O'Shaughnessy A."/>
            <person name="Rodriguez M."/>
            <person name="Hoffman J."/>
            <person name="Till S."/>
            <person name="Granat S."/>
            <person name="Shohdy N."/>
            <person name="Hasegawa A."/>
            <person name="Hameed A."/>
            <person name="Lodhi M."/>
            <person name="Johnson A."/>
            <person name="Chen E."/>
            <person name="Marra M.A."/>
            <person name="Martienssen R."/>
            <person name="McCombie W.R."/>
        </authorList>
    </citation>
    <scope>NUCLEOTIDE SEQUENCE [LARGE SCALE GENOMIC DNA]</scope>
    <source>
        <strain>cv. Columbia</strain>
    </source>
</reference>
<reference key="2">
    <citation type="journal article" date="2017" name="Plant J.">
        <title>Araport11: a complete reannotation of the Arabidopsis thaliana reference genome.</title>
        <authorList>
            <person name="Cheng C.Y."/>
            <person name="Krishnakumar V."/>
            <person name="Chan A.P."/>
            <person name="Thibaud-Nissen F."/>
            <person name="Schobel S."/>
            <person name="Town C.D."/>
        </authorList>
    </citation>
    <scope>GENOME REANNOTATION</scope>
    <source>
        <strain>cv. Columbia</strain>
    </source>
</reference>
<reference key="3">
    <citation type="journal article" date="2003" name="Science">
        <title>Empirical analysis of transcriptional activity in the Arabidopsis genome.</title>
        <authorList>
            <person name="Yamada K."/>
            <person name="Lim J."/>
            <person name="Dale J.M."/>
            <person name="Chen H."/>
            <person name="Shinn P."/>
            <person name="Palm C.J."/>
            <person name="Southwick A.M."/>
            <person name="Wu H.C."/>
            <person name="Kim C.J."/>
            <person name="Nguyen M."/>
            <person name="Pham P.K."/>
            <person name="Cheuk R.F."/>
            <person name="Karlin-Newmann G."/>
            <person name="Liu S.X."/>
            <person name="Lam B."/>
            <person name="Sakano H."/>
            <person name="Wu T."/>
            <person name="Yu G."/>
            <person name="Miranda M."/>
            <person name="Quach H.L."/>
            <person name="Tripp M."/>
            <person name="Chang C.H."/>
            <person name="Lee J.M."/>
            <person name="Toriumi M.J."/>
            <person name="Chan M.M."/>
            <person name="Tang C.C."/>
            <person name="Onodera C.S."/>
            <person name="Deng J.M."/>
            <person name="Akiyama K."/>
            <person name="Ansari Y."/>
            <person name="Arakawa T."/>
            <person name="Banh J."/>
            <person name="Banno F."/>
            <person name="Bowser L."/>
            <person name="Brooks S.Y."/>
            <person name="Carninci P."/>
            <person name="Chao Q."/>
            <person name="Choy N."/>
            <person name="Enju A."/>
            <person name="Goldsmith A.D."/>
            <person name="Gurjal M."/>
            <person name="Hansen N.F."/>
            <person name="Hayashizaki Y."/>
            <person name="Johnson-Hopson C."/>
            <person name="Hsuan V.W."/>
            <person name="Iida K."/>
            <person name="Karnes M."/>
            <person name="Khan S."/>
            <person name="Koesema E."/>
            <person name="Ishida J."/>
            <person name="Jiang P.X."/>
            <person name="Jones T."/>
            <person name="Kawai J."/>
            <person name="Kamiya A."/>
            <person name="Meyers C."/>
            <person name="Nakajima M."/>
            <person name="Narusaka M."/>
            <person name="Seki M."/>
            <person name="Sakurai T."/>
            <person name="Satou M."/>
            <person name="Tamse R."/>
            <person name="Vaysberg M."/>
            <person name="Wallender E.K."/>
            <person name="Wong C."/>
            <person name="Yamamura Y."/>
            <person name="Yuan S."/>
            <person name="Shinozaki K."/>
            <person name="Davis R.W."/>
            <person name="Theologis A."/>
            <person name="Ecker J.R."/>
        </authorList>
    </citation>
    <scope>NUCLEOTIDE SEQUENCE [LARGE SCALE MRNA]</scope>
    <source>
        <strain>cv. Columbia</strain>
    </source>
</reference>
<reference key="4">
    <citation type="journal article" date="2004" name="Plant Mol. Biol.">
        <title>Functional genomic analysis of Arabidopsis thaliana glycoside hydrolase family 1.</title>
        <authorList>
            <person name="Xu Z."/>
            <person name="Escamilla-Trevino L.L."/>
            <person name="Zeng L."/>
            <person name="Lalgondar M."/>
            <person name="Bevan D.R."/>
            <person name="Winkel B.S.J."/>
            <person name="Mohamed A."/>
            <person name="Cheng C.-L."/>
            <person name="Shih M.-C."/>
            <person name="Poulton J.E."/>
            <person name="Esen A."/>
        </authorList>
    </citation>
    <scope>GENE FAMILY</scope>
    <scope>NOMENCLATURE</scope>
</reference>
<reference key="5">
    <citation type="journal article" date="2013" name="Plant Physiol. Biochem.">
        <title>The flavonoid biosynthetic pathway in Arabidopsis: Structural and genetic diversity.</title>
        <authorList>
            <person name="Saito K."/>
            <person name="Yonekura-Sakakibara K."/>
            <person name="Nakabayashi R."/>
            <person name="Higashi Y."/>
            <person name="Yamazaki M."/>
            <person name="Tohge T."/>
            <person name="Fernie A.R."/>
        </authorList>
    </citation>
    <scope>REVIEW</scope>
    <scope>NOMENCLATURE</scope>
</reference>
<protein>
    <recommendedName>
        <fullName evidence="7">Beta-glucosidase 10</fullName>
        <shortName evidence="7">AtBGLU10</shortName>
        <ecNumber evidence="1">3.2.1.21</ecNumber>
    </recommendedName>
</protein>
<dbReference type="EC" id="3.2.1.21" evidence="1"/>
<dbReference type="EMBL" id="AL078579">
    <property type="protein sequence ID" value="CAB43971.1"/>
    <property type="status" value="ALT_SEQ"/>
    <property type="molecule type" value="Genomic_DNA"/>
</dbReference>
<dbReference type="EMBL" id="AL161571">
    <property type="protein sequence ID" value="CAB81432.1"/>
    <property type="status" value="ALT_SEQ"/>
    <property type="molecule type" value="Genomic_DNA"/>
</dbReference>
<dbReference type="EMBL" id="CP002687">
    <property type="protein sequence ID" value="AEE85398.1"/>
    <property type="molecule type" value="Genomic_DNA"/>
</dbReference>
<dbReference type="EMBL" id="AY057518">
    <property type="protein sequence ID" value="AAL09758.1"/>
    <property type="molecule type" value="mRNA"/>
</dbReference>
<dbReference type="EMBL" id="BT002654">
    <property type="protein sequence ID" value="AAO11570.1"/>
    <property type="molecule type" value="mRNA"/>
</dbReference>
<dbReference type="PIR" id="T09022">
    <property type="entry name" value="T09022"/>
</dbReference>
<dbReference type="RefSeq" id="NP_567787.1">
    <property type="nucleotide sequence ID" value="NM_118921.4"/>
</dbReference>
<dbReference type="SMR" id="Q93ZI4"/>
<dbReference type="FunCoup" id="Q93ZI4">
    <property type="interactions" value="204"/>
</dbReference>
<dbReference type="STRING" id="3702.Q93ZI4"/>
<dbReference type="CAZy" id="GH1">
    <property type="family name" value="Glycoside Hydrolase Family 1"/>
</dbReference>
<dbReference type="GlyCosmos" id="Q93ZI4">
    <property type="glycosylation" value="7 sites, No reported glycans"/>
</dbReference>
<dbReference type="GlyGen" id="Q93ZI4">
    <property type="glycosylation" value="7 sites"/>
</dbReference>
<dbReference type="PaxDb" id="3702-AT4G27830.1"/>
<dbReference type="ProteomicsDB" id="240828"/>
<dbReference type="EnsemblPlants" id="AT4G27830.1">
    <property type="protein sequence ID" value="AT4G27830.1"/>
    <property type="gene ID" value="AT4G27830"/>
</dbReference>
<dbReference type="GeneID" id="828896"/>
<dbReference type="Gramene" id="AT4G27830.1">
    <property type="protein sequence ID" value="AT4G27830.1"/>
    <property type="gene ID" value="AT4G27830"/>
</dbReference>
<dbReference type="KEGG" id="ath:AT4G27830"/>
<dbReference type="Araport" id="AT4G27830"/>
<dbReference type="TAIR" id="AT4G27830">
    <property type="gene designation" value="BGLU10"/>
</dbReference>
<dbReference type="eggNOG" id="KOG0626">
    <property type="taxonomic scope" value="Eukaryota"/>
</dbReference>
<dbReference type="HOGENOM" id="CLU_001859_1_0_1"/>
<dbReference type="InParanoid" id="Q93ZI4"/>
<dbReference type="OMA" id="DFMYGWI"/>
<dbReference type="OrthoDB" id="65569at2759"/>
<dbReference type="PhylomeDB" id="Q93ZI4"/>
<dbReference type="BioCyc" id="ARA:AT4G27830-MONOMER"/>
<dbReference type="BioCyc" id="MetaCyc:MONOMER-18515"/>
<dbReference type="BRENDA" id="2.4.1.B70">
    <property type="organism ID" value="399"/>
</dbReference>
<dbReference type="PRO" id="PR:Q93ZI4"/>
<dbReference type="Proteomes" id="UP000006548">
    <property type="component" value="Chromosome 4"/>
</dbReference>
<dbReference type="ExpressionAtlas" id="Q93ZI4">
    <property type="expression patterns" value="baseline and differential"/>
</dbReference>
<dbReference type="GO" id="GO:0000325">
    <property type="term" value="C:plant-type vacuole"/>
    <property type="evidence" value="ECO:0007005"/>
    <property type="project" value="TAIR"/>
</dbReference>
<dbReference type="GO" id="GO:0008422">
    <property type="term" value="F:beta-glucosidase activity"/>
    <property type="evidence" value="ECO:0007669"/>
    <property type="project" value="UniProtKB-EC"/>
</dbReference>
<dbReference type="GO" id="GO:0046283">
    <property type="term" value="P:anthocyanin-containing compound metabolic process"/>
    <property type="evidence" value="ECO:0000315"/>
    <property type="project" value="TAIR"/>
</dbReference>
<dbReference type="GO" id="GO:0005975">
    <property type="term" value="P:carbohydrate metabolic process"/>
    <property type="evidence" value="ECO:0007669"/>
    <property type="project" value="InterPro"/>
</dbReference>
<dbReference type="FunFam" id="3.20.20.80:FF:000069">
    <property type="entry name" value="Beta-glucosidase 1"/>
    <property type="match status" value="1"/>
</dbReference>
<dbReference type="Gene3D" id="3.20.20.80">
    <property type="entry name" value="Glycosidases"/>
    <property type="match status" value="1"/>
</dbReference>
<dbReference type="InterPro" id="IPR001360">
    <property type="entry name" value="Glyco_hydro_1"/>
</dbReference>
<dbReference type="InterPro" id="IPR033132">
    <property type="entry name" value="Glyco_hydro_1_N_CS"/>
</dbReference>
<dbReference type="InterPro" id="IPR017853">
    <property type="entry name" value="Glycoside_hydrolase_SF"/>
</dbReference>
<dbReference type="PANTHER" id="PTHR10353:SF211">
    <property type="entry name" value="BETA-GLUCOSIDASE 10-RELATED"/>
    <property type="match status" value="1"/>
</dbReference>
<dbReference type="PANTHER" id="PTHR10353">
    <property type="entry name" value="GLYCOSYL HYDROLASE"/>
    <property type="match status" value="1"/>
</dbReference>
<dbReference type="Pfam" id="PF00232">
    <property type="entry name" value="Glyco_hydro_1"/>
    <property type="match status" value="1"/>
</dbReference>
<dbReference type="PRINTS" id="PR00131">
    <property type="entry name" value="GLHYDRLASE1"/>
</dbReference>
<dbReference type="SUPFAM" id="SSF51445">
    <property type="entry name" value="(Trans)glycosidases"/>
    <property type="match status" value="1"/>
</dbReference>
<dbReference type="PROSITE" id="PS00653">
    <property type="entry name" value="GLYCOSYL_HYDROL_F1_2"/>
    <property type="match status" value="1"/>
</dbReference>
<name>BGL10_ARATH</name>
<organism>
    <name type="scientific">Arabidopsis thaliana</name>
    <name type="common">Mouse-ear cress</name>
    <dbReference type="NCBI Taxonomy" id="3702"/>
    <lineage>
        <taxon>Eukaryota</taxon>
        <taxon>Viridiplantae</taxon>
        <taxon>Streptophyta</taxon>
        <taxon>Embryophyta</taxon>
        <taxon>Tracheophyta</taxon>
        <taxon>Spermatophyta</taxon>
        <taxon>Magnoliopsida</taxon>
        <taxon>eudicotyledons</taxon>
        <taxon>Gunneridae</taxon>
        <taxon>Pentapetalae</taxon>
        <taxon>rosids</taxon>
        <taxon>malvids</taxon>
        <taxon>Brassicales</taxon>
        <taxon>Brassicaceae</taxon>
        <taxon>Camelineae</taxon>
        <taxon>Arabidopsis</taxon>
    </lineage>
</organism>
<evidence type="ECO:0000250" key="1">
    <source>
        <dbReference type="UniProtKB" id="O64879"/>
    </source>
</evidence>
<evidence type="ECO:0000250" key="2">
    <source>
        <dbReference type="UniProtKB" id="Q1XH05"/>
    </source>
</evidence>
<evidence type="ECO:0000250" key="3">
    <source>
        <dbReference type="UniProtKB" id="Q7XSK0"/>
    </source>
</evidence>
<evidence type="ECO:0000250" key="4">
    <source>
        <dbReference type="UniProtKB" id="Q9SPP9"/>
    </source>
</evidence>
<evidence type="ECO:0000255" key="5"/>
<evidence type="ECO:0000255" key="6">
    <source>
        <dbReference type="PROSITE-ProRule" id="PRU00498"/>
    </source>
</evidence>
<evidence type="ECO:0000303" key="7">
    <source>
    </source>
</evidence>
<evidence type="ECO:0000305" key="8"/>
<evidence type="ECO:0000312" key="9">
    <source>
        <dbReference type="Araport" id="AT4G27830"/>
    </source>
</evidence>
<evidence type="ECO:0000312" key="10">
    <source>
        <dbReference type="EMBL" id="CAB43971.1"/>
    </source>
</evidence>
<proteinExistence type="evidence at transcript level"/>
<accession>Q93ZI4</accession>
<accession>Q9STP3</accession>